<dbReference type="EMBL" id="AF164610">
    <property type="status" value="NOT_ANNOTATED_CDS"/>
    <property type="molecule type" value="Genomic_DNA"/>
</dbReference>
<dbReference type="BioMuta" id="HGNC:31828"/>
<dbReference type="AGR" id="HGNC:31828"/>
<dbReference type="GeneCards" id="ERVK-7"/>
<dbReference type="HGNC" id="HGNC:31828">
    <property type="gene designation" value="ERVK-7"/>
</dbReference>
<dbReference type="MIM" id="614013">
    <property type="type" value="gene"/>
</dbReference>
<dbReference type="neXtProt" id="NX_P61582"/>
<dbReference type="PhylomeDB" id="P61582"/>
<dbReference type="Pharos" id="P61582">
    <property type="development level" value="Tdark"/>
</dbReference>
<dbReference type="Proteomes" id="UP000005640">
    <property type="component" value="Unplaced"/>
</dbReference>
<dbReference type="GO" id="GO:0005634">
    <property type="term" value="C:nucleus"/>
    <property type="evidence" value="ECO:0007669"/>
    <property type="project" value="UniProtKB-SubCell"/>
</dbReference>
<sequence>MNPLEMQRKGPPRRWCLQVYPTAPKRQRPSRTGHDDDGGFVEKKRGKCGEKQERSDCYCVCVERSRHGRLHFVMC</sequence>
<protein>
    <recommendedName>
        <fullName>Endogenous retrovirus group K member 7 Np9 protein</fullName>
    </recommendedName>
    <alternativeName>
        <fullName>HERV-K(III) Np9 protein</fullName>
    </alternativeName>
    <alternativeName>
        <fullName>HERV-K102 Np9 protein</fullName>
    </alternativeName>
    <alternativeName>
        <fullName>HERV-K_1q22 provirus Np9 protein</fullName>
    </alternativeName>
</protein>
<feature type="chain" id="PRO_0000186786" description="Endogenous retrovirus group K member 7 Np9 protein">
    <location>
        <begin position="1"/>
        <end position="75"/>
    </location>
</feature>
<feature type="region of interest" description="Disordered" evidence="2">
    <location>
        <begin position="24"/>
        <end position="43"/>
    </location>
</feature>
<feature type="compositionally biased region" description="Basic and acidic residues" evidence="2">
    <location>
        <begin position="32"/>
        <end position="43"/>
    </location>
</feature>
<comment type="function">
    <text evidence="1">May possess a function in tumorigenesis.</text>
</comment>
<comment type="subcellular location">
    <subcellularLocation>
        <location evidence="1">Nucleus</location>
    </subcellularLocation>
    <text evidence="1">When overexpressed.</text>
</comment>
<comment type="miscellaneous">
    <text evidence="1">Protein expressed at very low level.</text>
</comment>
<comment type="miscellaneous">
    <text>This Np9 protein is encoded by a human specific provirus.</text>
</comment>
<comment type="miscellaneous">
    <text>Has a type 1 genome. The HERV-K(HML-2) family contains type 1 and type 2 genomes depending on the absence or presence of 292 nucleotides at the 5'-end of the env gene. Np9 proteins are translated from a doubly spliced transcript expressed exclusively by HERV-K(HML-2) type 1 proviral genomes. Np9 proteins share 14 N-terminal amino acids with HERV-K(HML-2) type 2 envelope proteins. The rest of the protein is encoded by a small exon located at the 3' end of the envelope gene. This exon shares the same splice acceptor site and therefore overlaps HERV-K(HML-2) type 2 Rec protein second exon. It is yet translated from an alternate reading frame.</text>
</comment>
<name>NP7_HUMAN</name>
<organism>
    <name type="scientific">Homo sapiens</name>
    <name type="common">Human</name>
    <dbReference type="NCBI Taxonomy" id="9606"/>
    <lineage>
        <taxon>Eukaryota</taxon>
        <taxon>Metazoa</taxon>
        <taxon>Chordata</taxon>
        <taxon>Craniata</taxon>
        <taxon>Vertebrata</taxon>
        <taxon>Euteleostomi</taxon>
        <taxon>Mammalia</taxon>
        <taxon>Eutheria</taxon>
        <taxon>Euarchontoglires</taxon>
        <taxon>Primates</taxon>
        <taxon>Haplorrhini</taxon>
        <taxon>Catarrhini</taxon>
        <taxon>Hominidae</taxon>
        <taxon>Homo</taxon>
    </lineage>
</organism>
<proteinExistence type="inferred from homology"/>
<keyword id="KW-0895">ERV</keyword>
<keyword id="KW-0539">Nucleus</keyword>
<keyword id="KW-1185">Reference proteome</keyword>
<keyword id="KW-0814">Transposable element</keyword>
<reference key="1">
    <citation type="journal article" date="1999" name="Curr. Biol.">
        <title>Many human endogenous retrovirus K (HERV-K) proviruses are unique to humans.</title>
        <authorList>
            <person name="Barbulescu M."/>
            <person name="Turner G."/>
            <person name="Seaman M.I."/>
            <person name="Deinard A.S."/>
            <person name="Kidd K.K."/>
            <person name="Lenz J."/>
        </authorList>
    </citation>
    <scope>NUCLEOTIDE SEQUENCE [GENOMIC DNA]</scope>
</reference>
<reference key="2">
    <citation type="journal article" date="2002" name="Clin. Cancer Res.">
        <title>A novel gene from the human endogenous retrovirus K expressed in transformed cells.</title>
        <authorList>
            <person name="Armbruester V."/>
            <person name="Sauter M."/>
            <person name="Krautkraemer E."/>
            <person name="Meese E.U."/>
            <person name="Kleiman A."/>
            <person name="Best B."/>
            <person name="Roemer K."/>
            <person name="Mueller-Lantzsch N."/>
        </authorList>
    </citation>
    <scope>IDENTIFICATION</scope>
</reference>
<accession>P61582</accession>
<evidence type="ECO:0000250" key="1"/>
<evidence type="ECO:0000256" key="2">
    <source>
        <dbReference type="SAM" id="MobiDB-lite"/>
    </source>
</evidence>
<gene>
    <name type="primary">ERVK-7</name>
</gene>